<sequence length="126" mass="13711">MTFLRPILALLAATALVTTSAQVDGGYSKKEVTPEDMELLQKAQSNVSAYNSDVTSRICYLKVDSLETQVVSGENYKFHVSGCSVNSDNELGGCANQNCESSKYDIVIYSQSWTNTLEVTSITPVK</sequence>
<accession>D0NBV1</accession>
<name>EPIC1_PHYIT</name>
<reference key="1">
    <citation type="journal article" date="2009" name="Nature">
        <title>Genome sequence and analysis of the Irish potato famine pathogen Phytophthora infestans.</title>
        <authorList>
            <consortium name="The Broad Institute Genome Sequencing Platform"/>
            <person name="Haas B.J."/>
            <person name="Kamoun S."/>
            <person name="Zody M.C."/>
            <person name="Jiang R.H."/>
            <person name="Handsaker R.E."/>
            <person name="Cano L.M."/>
            <person name="Grabherr M."/>
            <person name="Kodira C.D."/>
            <person name="Raffaele S."/>
            <person name="Torto-Alalibo T."/>
            <person name="Bozkurt T.O."/>
            <person name="Ah-Fong A.M."/>
            <person name="Alvarado L."/>
            <person name="Anderson V.L."/>
            <person name="Armstrong M.R."/>
            <person name="Avrova A."/>
            <person name="Baxter L."/>
            <person name="Beynon J."/>
            <person name="Boevink P.C."/>
            <person name="Bollmann S.R."/>
            <person name="Bos J.I."/>
            <person name="Bulone V."/>
            <person name="Cai G."/>
            <person name="Cakir C."/>
            <person name="Carrington J.C."/>
            <person name="Chawner M."/>
            <person name="Conti L."/>
            <person name="Costanzo S."/>
            <person name="Ewan R."/>
            <person name="Fahlgren N."/>
            <person name="Fischbach M.A."/>
            <person name="Fugelstad J."/>
            <person name="Gilroy E.M."/>
            <person name="Gnerre S."/>
            <person name="Green P.J."/>
            <person name="Grenville-Briggs L.J."/>
            <person name="Griffith J."/>
            <person name="Grunwald N.J."/>
            <person name="Horn K."/>
            <person name="Horner N.R."/>
            <person name="Hu C.H."/>
            <person name="Huitema E."/>
            <person name="Jeong D.H."/>
            <person name="Jones A.M."/>
            <person name="Jones J.D."/>
            <person name="Jones R.W."/>
            <person name="Karlsson E.K."/>
            <person name="Kunjeti S.G."/>
            <person name="Lamour K."/>
            <person name="Liu Z."/>
            <person name="Ma L."/>
            <person name="Maclean D."/>
            <person name="Chibucos M.C."/>
            <person name="McDonald H."/>
            <person name="McWalters J."/>
            <person name="Meijer H.J."/>
            <person name="Morgan W."/>
            <person name="Morris P.F."/>
            <person name="Munro C.A."/>
            <person name="O'Neill K."/>
            <person name="Ospina-Giraldo M."/>
            <person name="Pinzon A."/>
            <person name="Pritchard L."/>
            <person name="Ramsahoye B."/>
            <person name="Ren Q."/>
            <person name="Restrepo S."/>
            <person name="Roy S."/>
            <person name="Sadanandom A."/>
            <person name="Savidor A."/>
            <person name="Schornack S."/>
            <person name="Schwartz D.C."/>
            <person name="Schumann U.D."/>
            <person name="Schwessinger B."/>
            <person name="Seyer L."/>
            <person name="Sharpe T."/>
            <person name="Silvar C."/>
            <person name="Song J."/>
            <person name="Studholme D.J."/>
            <person name="Sykes S."/>
            <person name="Thines M."/>
            <person name="van de Vondervoort P.J."/>
            <person name="Phuntumart V."/>
            <person name="Wawra S."/>
            <person name="Weide R."/>
            <person name="Win J."/>
            <person name="Young C."/>
            <person name="Zhou S."/>
            <person name="Fry W."/>
            <person name="Meyers B.C."/>
            <person name="van West P."/>
            <person name="Ristaino J."/>
            <person name="Govers F."/>
            <person name="Birch P.R."/>
            <person name="Whisson S.C."/>
            <person name="Judelson H.S."/>
            <person name="Nusbaum C."/>
        </authorList>
    </citation>
    <scope>NUCLEOTIDE SEQUENCE [LARGE SCALE GENOMIC DNA]</scope>
    <source>
        <strain>T30-4</strain>
    </source>
</reference>
<reference key="2">
    <citation type="journal article" date="2007" name="Plant Physiol.">
        <title>A Phytophthora infestans cystatin-like protein targets a novel tomato papain-like apoplastic protease.</title>
        <authorList>
            <person name="Tian M."/>
            <person name="Win J."/>
            <person name="Song J."/>
            <person name="van der Hoorn R."/>
            <person name="van der Knaap E."/>
            <person name="Kamoun S."/>
        </authorList>
    </citation>
    <scope>INDUCTION</scope>
    <scope>FUNCTION</scope>
    <scope>SUBCELLULAR LOCATION</scope>
</reference>
<reference key="3">
    <citation type="journal article" date="2009" name="Proc. Natl. Acad. Sci. U.S.A.">
        <title>Apoplastic effectors secreted by two unrelated eukaryotic plant pathogens target the tomato defense protease Rcr3.</title>
        <authorList>
            <person name="Song J."/>
            <person name="Win J."/>
            <person name="Tian M."/>
            <person name="Schornack S."/>
            <person name="Kaschani F."/>
            <person name="Ilyas M."/>
            <person name="van der Hoorn R.A."/>
            <person name="Kamoun S."/>
        </authorList>
    </citation>
    <scope>FUNCTION</scope>
    <scope>SUBCELLULAR LOCATION</scope>
    <scope>INTERACTION WITH HOST RCR3</scope>
</reference>
<reference key="4">
    <citation type="journal article" date="2010" name="Plant Physiol.">
        <title>An effector-targeted protease contributes to defense against Phytophthora infestans and is under diversifying selection in natural hosts.</title>
        <authorList>
            <person name="Kaschani F."/>
            <person name="Shabab M."/>
            <person name="Bozkurt T."/>
            <person name="Shindo T."/>
            <person name="Schornack S."/>
            <person name="Gu C."/>
            <person name="Ilyas M."/>
            <person name="Win J."/>
            <person name="Kamoun S."/>
            <person name="van der Hoorn R.A."/>
        </authorList>
    </citation>
    <scope>FUNCTION</scope>
    <scope>SUBCELLULAR LOCATION</scope>
    <scope>INTERACTION WITH HOST C14</scope>
</reference>
<reference key="5">
    <citation type="journal article" date="2011" name="Plant Signal. Behav.">
        <title>A model of the C14-EPIC complex indicates hotspots for a protease-inhibitor arms race in the oomycete-potato interaction.</title>
        <authorList>
            <person name="Kaschani F."/>
            <person name="Van der Hoorn R.A."/>
        </authorList>
    </citation>
    <scope>EPIC1-C14 COMPLEX STRUCTURE MODELING</scope>
</reference>
<protein>
    <recommendedName>
        <fullName evidence="7">Cystatin-like cysteine protease inhibitor EPIC1</fullName>
    </recommendedName>
    <alternativeName>
        <fullName evidence="7">Extracellular protease inhibitor with cystatin-like domain protein 1</fullName>
    </alternativeName>
    <alternativeName>
        <fullName evidence="7">Secreted effector EPIC1</fullName>
    </alternativeName>
</protein>
<keyword id="KW-0325">Glycoprotein</keyword>
<keyword id="KW-0646">Protease inhibitor</keyword>
<keyword id="KW-1185">Reference proteome</keyword>
<keyword id="KW-0964">Secreted</keyword>
<keyword id="KW-0732">Signal</keyword>
<keyword id="KW-0789">Thiol protease inhibitor</keyword>
<keyword id="KW-0843">Virulence</keyword>
<evidence type="ECO:0000250" key="1">
    <source>
        <dbReference type="UniProtKB" id="P01040"/>
    </source>
</evidence>
<evidence type="ECO:0000255" key="2"/>
<evidence type="ECO:0000255" key="3">
    <source>
        <dbReference type="PROSITE-ProRule" id="PRU00498"/>
    </source>
</evidence>
<evidence type="ECO:0000269" key="4">
    <source>
    </source>
</evidence>
<evidence type="ECO:0000269" key="5">
    <source>
    </source>
</evidence>
<evidence type="ECO:0000269" key="6">
    <source>
    </source>
</evidence>
<evidence type="ECO:0000303" key="7">
    <source>
    </source>
</evidence>
<evidence type="ECO:0000305" key="8"/>
<evidence type="ECO:0000305" key="9">
    <source>
    </source>
</evidence>
<proteinExistence type="evidence at protein level"/>
<dbReference type="EMBL" id="DS028131">
    <property type="protein sequence ID" value="EEY55256.1"/>
    <property type="molecule type" value="Genomic_DNA"/>
</dbReference>
<dbReference type="RefSeq" id="XP_002903480.1">
    <property type="nucleotide sequence ID" value="XM_002903434.1"/>
</dbReference>
<dbReference type="SMR" id="D0NBV1"/>
<dbReference type="STRING" id="403677.D0NBV1"/>
<dbReference type="GlyCosmos" id="D0NBV1">
    <property type="glycosylation" value="1 site, No reported glycans"/>
</dbReference>
<dbReference type="EnsemblProtists" id="PITG_09169T0">
    <property type="protein sequence ID" value="PITG_09169T0"/>
    <property type="gene ID" value="PITG_09169"/>
</dbReference>
<dbReference type="GeneID" id="9470507"/>
<dbReference type="KEGG" id="pif:PITG_09169"/>
<dbReference type="VEuPathDB" id="FungiDB:PITG_09169"/>
<dbReference type="eggNOG" id="ENOG502RGHP">
    <property type="taxonomic scope" value="Eukaryota"/>
</dbReference>
<dbReference type="HOGENOM" id="CLU_117422_0_0_1"/>
<dbReference type="InParanoid" id="D0NBV1"/>
<dbReference type="OMA" id="GWHNTTN"/>
<dbReference type="OrthoDB" id="164262at2759"/>
<dbReference type="PHI-base" id="PHI:6286"/>
<dbReference type="Proteomes" id="UP000006643">
    <property type="component" value="Partially assembled WGS sequence"/>
</dbReference>
<dbReference type="GO" id="GO:0005576">
    <property type="term" value="C:extracellular region"/>
    <property type="evidence" value="ECO:0007669"/>
    <property type="project" value="UniProtKB-SubCell"/>
</dbReference>
<dbReference type="GO" id="GO:0004869">
    <property type="term" value="F:cysteine-type endopeptidase inhibitor activity"/>
    <property type="evidence" value="ECO:0007669"/>
    <property type="project" value="UniProtKB-KW"/>
</dbReference>
<dbReference type="GO" id="GO:0030414">
    <property type="term" value="F:peptidase inhibitor activity"/>
    <property type="evidence" value="ECO:0000250"/>
    <property type="project" value="UniProtKB"/>
</dbReference>
<dbReference type="Gene3D" id="3.10.450.10">
    <property type="match status" value="1"/>
</dbReference>
<dbReference type="InterPro" id="IPR046350">
    <property type="entry name" value="Cystatin_sf"/>
</dbReference>
<dbReference type="SUPFAM" id="SSF54403">
    <property type="entry name" value="Cystatin/monellin"/>
    <property type="match status" value="1"/>
</dbReference>
<dbReference type="PROSITE" id="PS00287">
    <property type="entry name" value="CYSTATIN"/>
    <property type="match status" value="1"/>
</dbReference>
<feature type="signal peptide" evidence="2">
    <location>
        <begin position="1"/>
        <end position="21"/>
    </location>
</feature>
<feature type="chain" id="PRO_5003013190" description="Cystatin-like cysteine protease inhibitor EPIC1">
    <location>
        <begin position="22"/>
        <end position="126"/>
    </location>
</feature>
<feature type="short sequence motif" description="Secondary area of contact" evidence="1">
    <location>
        <begin position="69"/>
        <end position="73"/>
    </location>
</feature>
<feature type="site" description="Reactive site" evidence="1">
    <location>
        <position position="25"/>
    </location>
</feature>
<feature type="glycosylation site" description="N-linked (GlcNAc...) asparagine" evidence="3">
    <location>
        <position position="46"/>
    </location>
</feature>
<organism>
    <name type="scientific">Phytophthora infestans (strain T30-4)</name>
    <name type="common">Potato late blight agent</name>
    <dbReference type="NCBI Taxonomy" id="403677"/>
    <lineage>
        <taxon>Eukaryota</taxon>
        <taxon>Sar</taxon>
        <taxon>Stramenopiles</taxon>
        <taxon>Oomycota</taxon>
        <taxon>Peronosporales</taxon>
        <taxon>Peronosporaceae</taxon>
        <taxon>Phytophthora</taxon>
    </lineage>
</organism>
<comment type="function">
    <text evidence="4 5 6">Secreted effector that interacts with and inhibits the pathogenesis-related papain-like cysteine proteases C147 and RCR3 of host plants (PubMed:17085509, PubMed:19171904, PubMed:20940351). Inhibition of host proteases by a pathogen extracellular protease inhibitor forms a specific type of defense-counterdefense mechanism between plants and microbial pathogens (PubMed:17085509, PubMed:19171904, PubMed:20940351).</text>
</comment>
<comment type="subunit">
    <text evidence="5 6 9">Interacts with the host papain-like cysteine protease RCR3 (PubMed:19171904). Interacts with the host papain-like cysteine protease C14 (Probable) (PubMed:20940351).</text>
</comment>
<comment type="subcellular location">
    <subcellularLocation>
        <location evidence="4 5 6">Secreted</location>
    </subcellularLocation>
    <text evidence="4 5 6">Localizes to host apoplast where it targets defense proteases for inhibition.</text>
</comment>
<comment type="induction">
    <text evidence="4">Expression is up-regulated during infection of host tomato.</text>
</comment>
<comment type="similarity">
    <text evidence="8">Belongs to the cystatin family.</text>
</comment>
<gene>
    <name evidence="7" type="primary">EPIC1</name>
    <name type="ORF">PITG_09169</name>
</gene>